<gene>
    <name evidence="1" type="primary">hisC</name>
    <name type="ordered locus">SPAB_00960</name>
</gene>
<organism>
    <name type="scientific">Salmonella paratyphi B (strain ATCC BAA-1250 / SPB7)</name>
    <dbReference type="NCBI Taxonomy" id="1016998"/>
    <lineage>
        <taxon>Bacteria</taxon>
        <taxon>Pseudomonadati</taxon>
        <taxon>Pseudomonadota</taxon>
        <taxon>Gammaproteobacteria</taxon>
        <taxon>Enterobacterales</taxon>
        <taxon>Enterobacteriaceae</taxon>
        <taxon>Salmonella</taxon>
    </lineage>
</organism>
<feature type="chain" id="PRO_1000084202" description="Histidinol-phosphate aminotransferase">
    <location>
        <begin position="1"/>
        <end position="359"/>
    </location>
</feature>
<feature type="modified residue" description="N6-(pyridoxal phosphate)lysine" evidence="1">
    <location>
        <position position="217"/>
    </location>
</feature>
<proteinExistence type="inferred from homology"/>
<comment type="catalytic activity">
    <reaction evidence="1">
        <text>L-histidinol phosphate + 2-oxoglutarate = 3-(imidazol-4-yl)-2-oxopropyl phosphate + L-glutamate</text>
        <dbReference type="Rhea" id="RHEA:23744"/>
        <dbReference type="ChEBI" id="CHEBI:16810"/>
        <dbReference type="ChEBI" id="CHEBI:29985"/>
        <dbReference type="ChEBI" id="CHEBI:57766"/>
        <dbReference type="ChEBI" id="CHEBI:57980"/>
        <dbReference type="EC" id="2.6.1.9"/>
    </reaction>
</comment>
<comment type="cofactor">
    <cofactor evidence="1">
        <name>pyridoxal 5'-phosphate</name>
        <dbReference type="ChEBI" id="CHEBI:597326"/>
    </cofactor>
</comment>
<comment type="pathway">
    <text evidence="1">Amino-acid biosynthesis; L-histidine biosynthesis; L-histidine from 5-phospho-alpha-D-ribose 1-diphosphate: step 7/9.</text>
</comment>
<comment type="subunit">
    <text evidence="1">Homodimer.</text>
</comment>
<comment type="similarity">
    <text evidence="1">Belongs to the class-II pyridoxal-phosphate-dependent aminotransferase family. Histidinol-phosphate aminotransferase subfamily.</text>
</comment>
<keyword id="KW-0028">Amino-acid biosynthesis</keyword>
<keyword id="KW-0032">Aminotransferase</keyword>
<keyword id="KW-0368">Histidine biosynthesis</keyword>
<keyword id="KW-0663">Pyridoxal phosphate</keyword>
<keyword id="KW-0808">Transferase</keyword>
<dbReference type="EC" id="2.6.1.9" evidence="1"/>
<dbReference type="EMBL" id="CP000886">
    <property type="protein sequence ID" value="ABX66382.1"/>
    <property type="molecule type" value="Genomic_DNA"/>
</dbReference>
<dbReference type="RefSeq" id="WP_000102710.1">
    <property type="nucleotide sequence ID" value="NC_010102.1"/>
</dbReference>
<dbReference type="SMR" id="A9MSC2"/>
<dbReference type="KEGG" id="spq:SPAB_00960"/>
<dbReference type="PATRIC" id="fig|1016998.12.peg.903"/>
<dbReference type="HOGENOM" id="CLU_017584_3_1_6"/>
<dbReference type="BioCyc" id="SENT1016998:SPAB_RS03980-MONOMER"/>
<dbReference type="UniPathway" id="UPA00031">
    <property type="reaction ID" value="UER00012"/>
</dbReference>
<dbReference type="Proteomes" id="UP000008556">
    <property type="component" value="Chromosome"/>
</dbReference>
<dbReference type="GO" id="GO:0004400">
    <property type="term" value="F:histidinol-phosphate transaminase activity"/>
    <property type="evidence" value="ECO:0007669"/>
    <property type="project" value="UniProtKB-UniRule"/>
</dbReference>
<dbReference type="GO" id="GO:0030170">
    <property type="term" value="F:pyridoxal phosphate binding"/>
    <property type="evidence" value="ECO:0007669"/>
    <property type="project" value="InterPro"/>
</dbReference>
<dbReference type="GO" id="GO:0000105">
    <property type="term" value="P:L-histidine biosynthetic process"/>
    <property type="evidence" value="ECO:0007669"/>
    <property type="project" value="UniProtKB-UniRule"/>
</dbReference>
<dbReference type="CDD" id="cd00609">
    <property type="entry name" value="AAT_like"/>
    <property type="match status" value="1"/>
</dbReference>
<dbReference type="FunFam" id="3.40.640.10:FF:000032">
    <property type="entry name" value="Histidinol-phosphate aminotransferase"/>
    <property type="match status" value="1"/>
</dbReference>
<dbReference type="Gene3D" id="3.90.1150.10">
    <property type="entry name" value="Aspartate Aminotransferase, domain 1"/>
    <property type="match status" value="1"/>
</dbReference>
<dbReference type="Gene3D" id="3.40.640.10">
    <property type="entry name" value="Type I PLP-dependent aspartate aminotransferase-like (Major domain)"/>
    <property type="match status" value="1"/>
</dbReference>
<dbReference type="HAMAP" id="MF_01023">
    <property type="entry name" value="HisC_aminotrans_2"/>
    <property type="match status" value="1"/>
</dbReference>
<dbReference type="InterPro" id="IPR001917">
    <property type="entry name" value="Aminotrans_II_pyridoxalP_BS"/>
</dbReference>
<dbReference type="InterPro" id="IPR004839">
    <property type="entry name" value="Aminotransferase_I/II_large"/>
</dbReference>
<dbReference type="InterPro" id="IPR005861">
    <property type="entry name" value="HisP_aminotrans"/>
</dbReference>
<dbReference type="InterPro" id="IPR015424">
    <property type="entry name" value="PyrdxlP-dep_Trfase"/>
</dbReference>
<dbReference type="InterPro" id="IPR015421">
    <property type="entry name" value="PyrdxlP-dep_Trfase_major"/>
</dbReference>
<dbReference type="InterPro" id="IPR015422">
    <property type="entry name" value="PyrdxlP-dep_Trfase_small"/>
</dbReference>
<dbReference type="NCBIfam" id="TIGR01141">
    <property type="entry name" value="hisC"/>
    <property type="match status" value="1"/>
</dbReference>
<dbReference type="PANTHER" id="PTHR42885:SF2">
    <property type="entry name" value="HISTIDINOL-PHOSPHATE AMINOTRANSFERASE"/>
    <property type="match status" value="1"/>
</dbReference>
<dbReference type="PANTHER" id="PTHR42885">
    <property type="entry name" value="HISTIDINOL-PHOSPHATE AMINOTRANSFERASE-RELATED"/>
    <property type="match status" value="1"/>
</dbReference>
<dbReference type="Pfam" id="PF00155">
    <property type="entry name" value="Aminotran_1_2"/>
    <property type="match status" value="1"/>
</dbReference>
<dbReference type="SUPFAM" id="SSF53383">
    <property type="entry name" value="PLP-dependent transferases"/>
    <property type="match status" value="1"/>
</dbReference>
<dbReference type="PROSITE" id="PS00599">
    <property type="entry name" value="AA_TRANSFER_CLASS_2"/>
    <property type="match status" value="1"/>
</dbReference>
<evidence type="ECO:0000255" key="1">
    <source>
        <dbReference type="HAMAP-Rule" id="MF_01023"/>
    </source>
</evidence>
<name>HIS8_SALPB</name>
<accession>A9MSC2</accession>
<protein>
    <recommendedName>
        <fullName evidence="1">Histidinol-phosphate aminotransferase</fullName>
        <ecNumber evidence="1">2.6.1.9</ecNumber>
    </recommendedName>
    <alternativeName>
        <fullName evidence="1">Imidazole acetol-phosphate transaminase</fullName>
    </alternativeName>
</protein>
<reference key="1">
    <citation type="submission" date="2007-11" db="EMBL/GenBank/DDBJ databases">
        <authorList>
            <consortium name="The Salmonella enterica serovar Paratyphi B Genome Sequencing Project"/>
            <person name="McClelland M."/>
            <person name="Sanderson E.K."/>
            <person name="Porwollik S."/>
            <person name="Spieth J."/>
            <person name="Clifton W.S."/>
            <person name="Fulton R."/>
            <person name="Cordes M."/>
            <person name="Wollam A."/>
            <person name="Shah N."/>
            <person name="Pepin K."/>
            <person name="Bhonagiri V."/>
            <person name="Nash W."/>
            <person name="Johnson M."/>
            <person name="Thiruvilangam P."/>
            <person name="Wilson R."/>
        </authorList>
    </citation>
    <scope>NUCLEOTIDE SEQUENCE [LARGE SCALE GENOMIC DNA]</scope>
    <source>
        <strain>ATCC BAA-1250 / SPB7</strain>
    </source>
</reference>
<sequence>MSTENTLSVADLARENVRNLVPYQSARRLGGNGDVWLNANEFPTAVEFQLTQQTLNRYPECQPKAVIENYAQYAGVKPEQVLVSRGADEGIELVIRAFCEPGKDAILYCPPTYGMYSVSAETIGVERRTVPALENWQLDLQGISDNLDGAKVVFVCSPNNPTGQLINPQDLRTLLELTRGKAIVVADEAYIEFCPQATLTGWLVEYPHLVILRTLSKAFALAGLRCGFTLANEEVINLLLKVIAPYPLSTPVADIAAQALSPQGINAMRDRVAQTVQERQYLVNALQQTACVEHVFDSETNYILARFTASSSVFKSLWDQGIILRDQNKQPSLSGCLRITVGTRQENQRVIDALRAEPV</sequence>